<gene>
    <name evidence="1" type="primary">pyrB</name>
    <name type="ordered locus">PSPPH_0473</name>
</gene>
<sequence length="334" mass="36397">MTPLDAKRPLQLNHQGQLRHFLSLDGLPRELLTEILDTADSFLEVGARAVKKVPLLRGKTVCNVFFENSTRTRTTFELAAQRLSADVITLNVSTSSTSKGETLFDTLRNLEAMAADMFVVRHADSGAAHFIAEHVCPDVAIINGGDGRHAHPTQGMLDMLTIRRHKGGFENLSVAIVGDILHSRVARSNMLALQALGCPDIRVIGPKTLLPVGVEQYGVKVYTDLNEGLKDVDVVIMLRLQRERMTGGLLPSEGEFYRLFGLTTARLAAAKPDAIVMHPGPINRGVEIESAVADGAHSVILNQVTYGIAIRMAVLSMAMSGQNAQRQFEQENAQ</sequence>
<keyword id="KW-0665">Pyrimidine biosynthesis</keyword>
<keyword id="KW-0808">Transferase</keyword>
<accession>Q48P93</accession>
<dbReference type="EC" id="2.1.3.2" evidence="1"/>
<dbReference type="EMBL" id="CP000058">
    <property type="protein sequence ID" value="AAZ36973.1"/>
    <property type="molecule type" value="Genomic_DNA"/>
</dbReference>
<dbReference type="RefSeq" id="WP_004666454.1">
    <property type="nucleotide sequence ID" value="NC_005773.3"/>
</dbReference>
<dbReference type="SMR" id="Q48P93"/>
<dbReference type="KEGG" id="psp:PSPPH_0473"/>
<dbReference type="eggNOG" id="COG0540">
    <property type="taxonomic scope" value="Bacteria"/>
</dbReference>
<dbReference type="HOGENOM" id="CLU_043846_2_0_6"/>
<dbReference type="UniPathway" id="UPA00070">
    <property type="reaction ID" value="UER00116"/>
</dbReference>
<dbReference type="Proteomes" id="UP000000551">
    <property type="component" value="Chromosome"/>
</dbReference>
<dbReference type="GO" id="GO:0005829">
    <property type="term" value="C:cytosol"/>
    <property type="evidence" value="ECO:0007669"/>
    <property type="project" value="TreeGrafter"/>
</dbReference>
<dbReference type="GO" id="GO:0016597">
    <property type="term" value="F:amino acid binding"/>
    <property type="evidence" value="ECO:0007669"/>
    <property type="project" value="InterPro"/>
</dbReference>
<dbReference type="GO" id="GO:0004070">
    <property type="term" value="F:aspartate carbamoyltransferase activity"/>
    <property type="evidence" value="ECO:0007669"/>
    <property type="project" value="UniProtKB-UniRule"/>
</dbReference>
<dbReference type="GO" id="GO:0006207">
    <property type="term" value="P:'de novo' pyrimidine nucleobase biosynthetic process"/>
    <property type="evidence" value="ECO:0007669"/>
    <property type="project" value="InterPro"/>
</dbReference>
<dbReference type="GO" id="GO:0044205">
    <property type="term" value="P:'de novo' UMP biosynthetic process"/>
    <property type="evidence" value="ECO:0007669"/>
    <property type="project" value="UniProtKB-UniRule"/>
</dbReference>
<dbReference type="GO" id="GO:0006520">
    <property type="term" value="P:amino acid metabolic process"/>
    <property type="evidence" value="ECO:0007669"/>
    <property type="project" value="InterPro"/>
</dbReference>
<dbReference type="FunFam" id="3.40.50.1370:FF:000006">
    <property type="entry name" value="Aspartate carbamoyltransferase"/>
    <property type="match status" value="1"/>
</dbReference>
<dbReference type="Gene3D" id="3.40.50.1370">
    <property type="entry name" value="Aspartate/ornithine carbamoyltransferase"/>
    <property type="match status" value="2"/>
</dbReference>
<dbReference type="HAMAP" id="MF_00001">
    <property type="entry name" value="Asp_carb_tr"/>
    <property type="match status" value="1"/>
</dbReference>
<dbReference type="InterPro" id="IPR006132">
    <property type="entry name" value="Asp/Orn_carbamoyltranf_P-bd"/>
</dbReference>
<dbReference type="InterPro" id="IPR006130">
    <property type="entry name" value="Asp/Orn_carbamoylTrfase"/>
</dbReference>
<dbReference type="InterPro" id="IPR036901">
    <property type="entry name" value="Asp/Orn_carbamoylTrfase_sf"/>
</dbReference>
<dbReference type="InterPro" id="IPR002082">
    <property type="entry name" value="Asp_carbamoyltransf"/>
</dbReference>
<dbReference type="InterPro" id="IPR006131">
    <property type="entry name" value="Asp_carbamoyltransf_Asp/Orn-bd"/>
</dbReference>
<dbReference type="NCBIfam" id="TIGR00670">
    <property type="entry name" value="asp_carb_tr"/>
    <property type="match status" value="1"/>
</dbReference>
<dbReference type="NCBIfam" id="NF002032">
    <property type="entry name" value="PRK00856.1"/>
    <property type="match status" value="1"/>
</dbReference>
<dbReference type="PANTHER" id="PTHR45753:SF6">
    <property type="entry name" value="ASPARTATE CARBAMOYLTRANSFERASE"/>
    <property type="match status" value="1"/>
</dbReference>
<dbReference type="PANTHER" id="PTHR45753">
    <property type="entry name" value="ORNITHINE CARBAMOYLTRANSFERASE, MITOCHONDRIAL"/>
    <property type="match status" value="1"/>
</dbReference>
<dbReference type="Pfam" id="PF00185">
    <property type="entry name" value="OTCace"/>
    <property type="match status" value="1"/>
</dbReference>
<dbReference type="Pfam" id="PF02729">
    <property type="entry name" value="OTCace_N"/>
    <property type="match status" value="1"/>
</dbReference>
<dbReference type="PRINTS" id="PR00100">
    <property type="entry name" value="AOTCASE"/>
</dbReference>
<dbReference type="PRINTS" id="PR00101">
    <property type="entry name" value="ATCASE"/>
</dbReference>
<dbReference type="SUPFAM" id="SSF53671">
    <property type="entry name" value="Aspartate/ornithine carbamoyltransferase"/>
    <property type="match status" value="1"/>
</dbReference>
<dbReference type="PROSITE" id="PS00097">
    <property type="entry name" value="CARBAMOYLTRANSFERASE"/>
    <property type="match status" value="1"/>
</dbReference>
<feature type="chain" id="PRO_0000321143" description="Aspartate carbamoyltransferase catalytic subunit">
    <location>
        <begin position="1"/>
        <end position="334"/>
    </location>
</feature>
<feature type="binding site" evidence="1">
    <location>
        <position position="71"/>
    </location>
    <ligand>
        <name>carbamoyl phosphate</name>
        <dbReference type="ChEBI" id="CHEBI:58228"/>
    </ligand>
</feature>
<feature type="binding site" evidence="1">
    <location>
        <position position="72"/>
    </location>
    <ligand>
        <name>carbamoyl phosphate</name>
        <dbReference type="ChEBI" id="CHEBI:58228"/>
    </ligand>
</feature>
<feature type="binding site" evidence="1">
    <location>
        <position position="99"/>
    </location>
    <ligand>
        <name>L-aspartate</name>
        <dbReference type="ChEBI" id="CHEBI:29991"/>
    </ligand>
</feature>
<feature type="binding site" evidence="1">
    <location>
        <position position="121"/>
    </location>
    <ligand>
        <name>carbamoyl phosphate</name>
        <dbReference type="ChEBI" id="CHEBI:58228"/>
    </ligand>
</feature>
<feature type="binding site" evidence="1">
    <location>
        <position position="151"/>
    </location>
    <ligand>
        <name>carbamoyl phosphate</name>
        <dbReference type="ChEBI" id="CHEBI:58228"/>
    </ligand>
</feature>
<feature type="binding site" evidence="1">
    <location>
        <position position="154"/>
    </location>
    <ligand>
        <name>carbamoyl phosphate</name>
        <dbReference type="ChEBI" id="CHEBI:58228"/>
    </ligand>
</feature>
<feature type="binding site" evidence="1">
    <location>
        <position position="184"/>
    </location>
    <ligand>
        <name>L-aspartate</name>
        <dbReference type="ChEBI" id="CHEBI:29991"/>
    </ligand>
</feature>
<feature type="binding site" evidence="1">
    <location>
        <position position="239"/>
    </location>
    <ligand>
        <name>L-aspartate</name>
        <dbReference type="ChEBI" id="CHEBI:29991"/>
    </ligand>
</feature>
<feature type="binding site" evidence="1">
    <location>
        <position position="280"/>
    </location>
    <ligand>
        <name>carbamoyl phosphate</name>
        <dbReference type="ChEBI" id="CHEBI:58228"/>
    </ligand>
</feature>
<feature type="binding site" evidence="1">
    <location>
        <position position="281"/>
    </location>
    <ligand>
        <name>carbamoyl phosphate</name>
        <dbReference type="ChEBI" id="CHEBI:58228"/>
    </ligand>
</feature>
<reference key="1">
    <citation type="journal article" date="2005" name="J. Bacteriol.">
        <title>Whole-genome sequence analysis of Pseudomonas syringae pv. phaseolicola 1448A reveals divergence among pathovars in genes involved in virulence and transposition.</title>
        <authorList>
            <person name="Joardar V."/>
            <person name="Lindeberg M."/>
            <person name="Jackson R.W."/>
            <person name="Selengut J."/>
            <person name="Dodson R."/>
            <person name="Brinkac L.M."/>
            <person name="Daugherty S.C."/>
            <person name="DeBoy R.T."/>
            <person name="Durkin A.S."/>
            <person name="Gwinn Giglio M."/>
            <person name="Madupu R."/>
            <person name="Nelson W.C."/>
            <person name="Rosovitz M.J."/>
            <person name="Sullivan S.A."/>
            <person name="Crabtree J."/>
            <person name="Creasy T."/>
            <person name="Davidsen T.M."/>
            <person name="Haft D.H."/>
            <person name="Zafar N."/>
            <person name="Zhou L."/>
            <person name="Halpin R."/>
            <person name="Holley T."/>
            <person name="Khouri H.M."/>
            <person name="Feldblyum T.V."/>
            <person name="White O."/>
            <person name="Fraser C.M."/>
            <person name="Chatterjee A.K."/>
            <person name="Cartinhour S."/>
            <person name="Schneider D."/>
            <person name="Mansfield J.W."/>
            <person name="Collmer A."/>
            <person name="Buell R."/>
        </authorList>
    </citation>
    <scope>NUCLEOTIDE SEQUENCE [LARGE SCALE GENOMIC DNA]</scope>
    <source>
        <strain>1448A / Race 6</strain>
    </source>
</reference>
<evidence type="ECO:0000255" key="1">
    <source>
        <dbReference type="HAMAP-Rule" id="MF_00001"/>
    </source>
</evidence>
<protein>
    <recommendedName>
        <fullName evidence="1">Aspartate carbamoyltransferase catalytic subunit</fullName>
        <ecNumber evidence="1">2.1.3.2</ecNumber>
    </recommendedName>
    <alternativeName>
        <fullName evidence="1">Aspartate transcarbamylase</fullName>
        <shortName evidence="1">ATCase</shortName>
    </alternativeName>
</protein>
<organism>
    <name type="scientific">Pseudomonas savastanoi pv. phaseolicola (strain 1448A / Race 6)</name>
    <name type="common">Pseudomonas syringae pv. phaseolicola (strain 1448A / Race 6)</name>
    <dbReference type="NCBI Taxonomy" id="264730"/>
    <lineage>
        <taxon>Bacteria</taxon>
        <taxon>Pseudomonadati</taxon>
        <taxon>Pseudomonadota</taxon>
        <taxon>Gammaproteobacteria</taxon>
        <taxon>Pseudomonadales</taxon>
        <taxon>Pseudomonadaceae</taxon>
        <taxon>Pseudomonas</taxon>
    </lineage>
</organism>
<proteinExistence type="inferred from homology"/>
<name>PYRB_PSE14</name>
<comment type="function">
    <text evidence="1">Catalyzes the condensation of carbamoyl phosphate and aspartate to form carbamoyl aspartate and inorganic phosphate, the committed step in the de novo pyrimidine nucleotide biosynthesis pathway.</text>
</comment>
<comment type="catalytic activity">
    <reaction evidence="1">
        <text>carbamoyl phosphate + L-aspartate = N-carbamoyl-L-aspartate + phosphate + H(+)</text>
        <dbReference type="Rhea" id="RHEA:20013"/>
        <dbReference type="ChEBI" id="CHEBI:15378"/>
        <dbReference type="ChEBI" id="CHEBI:29991"/>
        <dbReference type="ChEBI" id="CHEBI:32814"/>
        <dbReference type="ChEBI" id="CHEBI:43474"/>
        <dbReference type="ChEBI" id="CHEBI:58228"/>
        <dbReference type="EC" id="2.1.3.2"/>
    </reaction>
</comment>
<comment type="pathway">
    <text evidence="1">Pyrimidine metabolism; UMP biosynthesis via de novo pathway; (S)-dihydroorotate from bicarbonate: step 2/3.</text>
</comment>
<comment type="subunit">
    <text evidence="1">Heterododecamer (2C3:3R2) of six catalytic PyrB chains organized as two trimers (C3), and six regulatory PyrI chains organized as three dimers (R2).</text>
</comment>
<comment type="similarity">
    <text evidence="1">Belongs to the aspartate/ornithine carbamoyltransferase superfamily. ATCase family.</text>
</comment>